<accession>P46632</accession>
<gene>
    <name type="primary">CCL4</name>
    <name type="synonym">SCYA4</name>
</gene>
<evidence type="ECO:0000250" key="1"/>
<evidence type="ECO:0000305" key="2"/>
<protein>
    <recommendedName>
        <fullName>C-C motif chemokine 4</fullName>
    </recommendedName>
    <alternativeName>
        <fullName>Immune activation protein 2</fullName>
        <shortName>ACT-2</shortName>
    </alternativeName>
    <alternativeName>
        <fullName>Macrophage inflammatory protein 1-beta</fullName>
        <shortName>MIP-1-beta</shortName>
    </alternativeName>
    <alternativeName>
        <fullName>Small-inducible cytokine A4</fullName>
    </alternativeName>
</protein>
<comment type="function">
    <text evidence="1">Monokine with inflammatory and chemokinetic properties.</text>
</comment>
<comment type="subunit">
    <text evidence="1">Homodimer.</text>
</comment>
<comment type="subcellular location">
    <subcellularLocation>
        <location>Secreted</location>
    </subcellularLocation>
</comment>
<comment type="similarity">
    <text evidence="2">Belongs to the intercrine beta (chemokine CC) family.</text>
</comment>
<dbReference type="EMBL" id="D17402">
    <property type="protein sequence ID" value="BAA04226.1"/>
    <property type="molecule type" value="mRNA"/>
</dbReference>
<dbReference type="PIR" id="I46730">
    <property type="entry name" value="I46730"/>
</dbReference>
<dbReference type="RefSeq" id="NP_001075665.1">
    <property type="nucleotide sequence ID" value="NM_001082196.1"/>
</dbReference>
<dbReference type="SMR" id="P46632"/>
<dbReference type="FunCoup" id="P46632">
    <property type="interactions" value="268"/>
</dbReference>
<dbReference type="PaxDb" id="9986-ENSOCUP00000019709"/>
<dbReference type="GeneID" id="100008984"/>
<dbReference type="KEGG" id="ocu:100008984"/>
<dbReference type="CTD" id="6351"/>
<dbReference type="eggNOG" id="ENOG502S8M4">
    <property type="taxonomic scope" value="Eukaryota"/>
</dbReference>
<dbReference type="InParanoid" id="P46632"/>
<dbReference type="OrthoDB" id="9447832at2759"/>
<dbReference type="Proteomes" id="UP000001811">
    <property type="component" value="Unplaced"/>
</dbReference>
<dbReference type="GO" id="GO:0005615">
    <property type="term" value="C:extracellular space"/>
    <property type="evidence" value="ECO:0007669"/>
    <property type="project" value="UniProtKB-KW"/>
</dbReference>
<dbReference type="GO" id="GO:0048020">
    <property type="term" value="F:CCR chemokine receptor binding"/>
    <property type="evidence" value="ECO:0007669"/>
    <property type="project" value="TreeGrafter"/>
</dbReference>
<dbReference type="GO" id="GO:0008009">
    <property type="term" value="F:chemokine activity"/>
    <property type="evidence" value="ECO:0007669"/>
    <property type="project" value="InterPro"/>
</dbReference>
<dbReference type="GO" id="GO:0061844">
    <property type="term" value="P:antimicrobial humoral immune response mediated by antimicrobial peptide"/>
    <property type="evidence" value="ECO:0007669"/>
    <property type="project" value="TreeGrafter"/>
</dbReference>
<dbReference type="GO" id="GO:0070098">
    <property type="term" value="P:chemokine-mediated signaling pathway"/>
    <property type="evidence" value="ECO:0007669"/>
    <property type="project" value="TreeGrafter"/>
</dbReference>
<dbReference type="GO" id="GO:0048245">
    <property type="term" value="P:eosinophil chemotaxis"/>
    <property type="evidence" value="ECO:0007669"/>
    <property type="project" value="TreeGrafter"/>
</dbReference>
<dbReference type="GO" id="GO:0006954">
    <property type="term" value="P:inflammatory response"/>
    <property type="evidence" value="ECO:0007669"/>
    <property type="project" value="UniProtKB-KW"/>
</dbReference>
<dbReference type="GO" id="GO:0030335">
    <property type="term" value="P:positive regulation of cell migration"/>
    <property type="evidence" value="ECO:0007669"/>
    <property type="project" value="TreeGrafter"/>
</dbReference>
<dbReference type="CDD" id="cd00272">
    <property type="entry name" value="Chemokine_CC"/>
    <property type="match status" value="1"/>
</dbReference>
<dbReference type="FunFam" id="2.40.50.40:FF:000002">
    <property type="entry name" value="C-C motif chemokine"/>
    <property type="match status" value="1"/>
</dbReference>
<dbReference type="Gene3D" id="2.40.50.40">
    <property type="match status" value="1"/>
</dbReference>
<dbReference type="InterPro" id="IPR039809">
    <property type="entry name" value="Chemokine_b/g/d"/>
</dbReference>
<dbReference type="InterPro" id="IPR000827">
    <property type="entry name" value="Chemokine_CC_CS"/>
</dbReference>
<dbReference type="InterPro" id="IPR001811">
    <property type="entry name" value="Chemokine_IL8-like_dom"/>
</dbReference>
<dbReference type="InterPro" id="IPR036048">
    <property type="entry name" value="Interleukin_8-like_sf"/>
</dbReference>
<dbReference type="PANTHER" id="PTHR12015:SF103">
    <property type="entry name" value="C-C MOTIF CHEMOKINE 4-RELATED"/>
    <property type="match status" value="1"/>
</dbReference>
<dbReference type="PANTHER" id="PTHR12015">
    <property type="entry name" value="SMALL INDUCIBLE CYTOKINE A"/>
    <property type="match status" value="1"/>
</dbReference>
<dbReference type="Pfam" id="PF00048">
    <property type="entry name" value="IL8"/>
    <property type="match status" value="1"/>
</dbReference>
<dbReference type="SMART" id="SM00199">
    <property type="entry name" value="SCY"/>
    <property type="match status" value="1"/>
</dbReference>
<dbReference type="SUPFAM" id="SSF54117">
    <property type="entry name" value="Interleukin 8-like chemokines"/>
    <property type="match status" value="1"/>
</dbReference>
<dbReference type="PROSITE" id="PS00472">
    <property type="entry name" value="SMALL_CYTOKINES_CC"/>
    <property type="match status" value="1"/>
</dbReference>
<sequence length="92" mass="10066">MKLGVTVLSVALLVAALCPPALSAPMGSDPPTACCFSYTLRKLPRHFVIDYFETTSLCSQPAVVFQTKKGRQVCANPSESWVQEYVDDLELN</sequence>
<organism>
    <name type="scientific">Oryctolagus cuniculus</name>
    <name type="common">Rabbit</name>
    <dbReference type="NCBI Taxonomy" id="9986"/>
    <lineage>
        <taxon>Eukaryota</taxon>
        <taxon>Metazoa</taxon>
        <taxon>Chordata</taxon>
        <taxon>Craniata</taxon>
        <taxon>Vertebrata</taxon>
        <taxon>Euteleostomi</taxon>
        <taxon>Mammalia</taxon>
        <taxon>Eutheria</taxon>
        <taxon>Euarchontoglires</taxon>
        <taxon>Glires</taxon>
        <taxon>Lagomorpha</taxon>
        <taxon>Leporidae</taxon>
        <taxon>Oryctolagus</taxon>
    </lineage>
</organism>
<feature type="signal peptide" evidence="1">
    <location>
        <begin position="1"/>
        <end position="23"/>
    </location>
</feature>
<feature type="chain" id="PRO_0000005168" description="C-C motif chemokine 4">
    <location>
        <begin position="24"/>
        <end position="92"/>
    </location>
</feature>
<feature type="disulfide bond" evidence="1">
    <location>
        <begin position="34"/>
        <end position="58"/>
    </location>
</feature>
<feature type="disulfide bond" evidence="1">
    <location>
        <begin position="35"/>
        <end position="74"/>
    </location>
</feature>
<name>CCL4_RABIT</name>
<keyword id="KW-0145">Chemotaxis</keyword>
<keyword id="KW-0202">Cytokine</keyword>
<keyword id="KW-1015">Disulfide bond</keyword>
<keyword id="KW-0395">Inflammatory response</keyword>
<keyword id="KW-1185">Reference proteome</keyword>
<keyword id="KW-0964">Secreted</keyword>
<keyword id="KW-0732">Signal</keyword>
<reference key="1">
    <citation type="journal article" date="1994" name="Int. Immunol.">
        <title>Dynamic changes in mRNA expression of neutrophils during the course of acute inflammation in rabbits.</title>
        <authorList>
            <person name="Mori S."/>
            <person name="Goto K."/>
            <person name="Goto F."/>
            <person name="Mutakami K."/>
            <person name="Ohkawara S."/>
            <person name="Yoshinaga M."/>
        </authorList>
    </citation>
    <scope>NUCLEOTIDE SEQUENCE [MRNA]</scope>
    <source>
        <strain>New Zealand white</strain>
    </source>
</reference>
<proteinExistence type="inferred from homology"/>